<accession>Q8NGS9</accession>
<accession>B9EGV8</accession>
<accession>Q6IF54</accession>
<dbReference type="EMBL" id="AB065709">
    <property type="protein sequence ID" value="BAC05931.1"/>
    <property type="molecule type" value="Genomic_DNA"/>
</dbReference>
<dbReference type="EMBL" id="AL359846">
    <property type="status" value="NOT_ANNOTATED_CDS"/>
    <property type="molecule type" value="Genomic_DNA"/>
</dbReference>
<dbReference type="EMBL" id="CH471105">
    <property type="protein sequence ID" value="EAW58987.1"/>
    <property type="molecule type" value="Genomic_DNA"/>
</dbReference>
<dbReference type="EMBL" id="BC136824">
    <property type="protein sequence ID" value="AAI36825.1"/>
    <property type="molecule type" value="mRNA"/>
</dbReference>
<dbReference type="EMBL" id="BC136826">
    <property type="protein sequence ID" value="AAI36827.1"/>
    <property type="molecule type" value="mRNA"/>
</dbReference>
<dbReference type="EMBL" id="BK004408">
    <property type="protein sequence ID" value="DAA04806.1"/>
    <property type="molecule type" value="Genomic_DNA"/>
</dbReference>
<dbReference type="CCDS" id="CCDS35092.1"/>
<dbReference type="RefSeq" id="NP_001004481.1">
    <property type="nucleotide sequence ID" value="NM_001004481.1"/>
</dbReference>
<dbReference type="SMR" id="Q8NGS9"/>
<dbReference type="FunCoup" id="Q8NGS9">
    <property type="interactions" value="416"/>
</dbReference>
<dbReference type="STRING" id="9606.ENSP00000438815"/>
<dbReference type="GlyCosmos" id="Q8NGS9">
    <property type="glycosylation" value="1 site, No reported glycans"/>
</dbReference>
<dbReference type="GlyGen" id="Q8NGS9">
    <property type="glycosylation" value="1 site"/>
</dbReference>
<dbReference type="iPTMnet" id="Q8NGS9"/>
<dbReference type="PhosphoSitePlus" id="Q8NGS9"/>
<dbReference type="BioMuta" id="OR13C2"/>
<dbReference type="DMDM" id="38372766"/>
<dbReference type="jPOST" id="Q8NGS9"/>
<dbReference type="PaxDb" id="9606-ENSP00000438815"/>
<dbReference type="Antibodypedia" id="74606">
    <property type="antibodies" value="25 antibodies from 12 providers"/>
</dbReference>
<dbReference type="DNASU" id="392376"/>
<dbReference type="Ensembl" id="ENST00000542196.2">
    <property type="protein sequence ID" value="ENSP00000438815.1"/>
    <property type="gene ID" value="ENSG00000276119.1"/>
</dbReference>
<dbReference type="GeneID" id="392376"/>
<dbReference type="KEGG" id="hsa:392376"/>
<dbReference type="MANE-Select" id="ENST00000542196.2">
    <property type="protein sequence ID" value="ENSP00000438815.1"/>
    <property type="RefSeq nucleotide sequence ID" value="NM_001004481.1"/>
    <property type="RefSeq protein sequence ID" value="NP_001004481.1"/>
</dbReference>
<dbReference type="UCSC" id="uc011lvq.2">
    <property type="organism name" value="human"/>
</dbReference>
<dbReference type="AGR" id="HGNC:14701"/>
<dbReference type="CTD" id="392376"/>
<dbReference type="GeneCards" id="OR13C2"/>
<dbReference type="HGNC" id="HGNC:14701">
    <property type="gene designation" value="OR13C2"/>
</dbReference>
<dbReference type="HPA" id="ENSG00000276119">
    <property type="expression patterns" value="Not detected"/>
</dbReference>
<dbReference type="neXtProt" id="NX_Q8NGS9"/>
<dbReference type="PharmGKB" id="PA32032"/>
<dbReference type="VEuPathDB" id="HostDB:ENSG00000276119"/>
<dbReference type="eggNOG" id="ENOG502T9K1">
    <property type="taxonomic scope" value="Eukaryota"/>
</dbReference>
<dbReference type="GeneTree" id="ENSGT01040000240406"/>
<dbReference type="HOGENOM" id="CLU_012526_1_2_1"/>
<dbReference type="InParanoid" id="Q8NGS9"/>
<dbReference type="OMA" id="KESYVPM"/>
<dbReference type="OrthoDB" id="6144223at2759"/>
<dbReference type="PAN-GO" id="Q8NGS9">
    <property type="GO annotations" value="0 GO annotations based on evolutionary models"/>
</dbReference>
<dbReference type="PhylomeDB" id="Q8NGS9"/>
<dbReference type="TreeFam" id="TF352686"/>
<dbReference type="PathwayCommons" id="Q8NGS9"/>
<dbReference type="Reactome" id="R-HSA-9752946">
    <property type="pathway name" value="Expression and translocation of olfactory receptors"/>
</dbReference>
<dbReference type="BioGRID-ORCS" id="392376">
    <property type="hits" value="8 hits in 634 CRISPR screens"/>
</dbReference>
<dbReference type="GeneWiki" id="OR13C2"/>
<dbReference type="GenomeRNAi" id="392376"/>
<dbReference type="Pharos" id="Q8NGS9">
    <property type="development level" value="Tdark"/>
</dbReference>
<dbReference type="PRO" id="PR:Q8NGS9"/>
<dbReference type="Proteomes" id="UP000005640">
    <property type="component" value="Chromosome 9"/>
</dbReference>
<dbReference type="RNAct" id="Q8NGS9">
    <property type="molecule type" value="protein"/>
</dbReference>
<dbReference type="Bgee" id="ENSG00000276119">
    <property type="expression patterns" value="Expressed in primordial germ cell in gonad and 16 other cell types or tissues"/>
</dbReference>
<dbReference type="ExpressionAtlas" id="Q8NGS9">
    <property type="expression patterns" value="baseline and differential"/>
</dbReference>
<dbReference type="GO" id="GO:0005654">
    <property type="term" value="C:nucleoplasm"/>
    <property type="evidence" value="ECO:0000314"/>
    <property type="project" value="HPA"/>
</dbReference>
<dbReference type="GO" id="GO:0005886">
    <property type="term" value="C:plasma membrane"/>
    <property type="evidence" value="ECO:0000314"/>
    <property type="project" value="HPA"/>
</dbReference>
<dbReference type="GO" id="GO:0004930">
    <property type="term" value="F:G protein-coupled receptor activity"/>
    <property type="evidence" value="ECO:0007669"/>
    <property type="project" value="UniProtKB-KW"/>
</dbReference>
<dbReference type="GO" id="GO:0004984">
    <property type="term" value="F:olfactory receptor activity"/>
    <property type="evidence" value="ECO:0000318"/>
    <property type="project" value="GO_Central"/>
</dbReference>
<dbReference type="GO" id="GO:0050911">
    <property type="term" value="P:detection of chemical stimulus involved in sensory perception of smell"/>
    <property type="evidence" value="ECO:0000318"/>
    <property type="project" value="GO_Central"/>
</dbReference>
<dbReference type="CDD" id="cd15430">
    <property type="entry name" value="7tmA_OR13-like"/>
    <property type="match status" value="1"/>
</dbReference>
<dbReference type="FunFam" id="1.10.1220.70:FF:000001">
    <property type="entry name" value="Olfactory receptor"/>
    <property type="match status" value="1"/>
</dbReference>
<dbReference type="FunFam" id="1.20.1070.10:FF:000501">
    <property type="entry name" value="Olfactory receptor"/>
    <property type="match status" value="1"/>
</dbReference>
<dbReference type="Gene3D" id="1.20.1070.10">
    <property type="entry name" value="Rhodopsin 7-helix transmembrane proteins"/>
    <property type="match status" value="1"/>
</dbReference>
<dbReference type="InterPro" id="IPR000276">
    <property type="entry name" value="GPCR_Rhodpsn"/>
</dbReference>
<dbReference type="InterPro" id="IPR017452">
    <property type="entry name" value="GPCR_Rhodpsn_7TM"/>
</dbReference>
<dbReference type="InterPro" id="IPR000725">
    <property type="entry name" value="Olfact_rcpt"/>
</dbReference>
<dbReference type="PANTHER" id="PTHR26453">
    <property type="entry name" value="OLFACTORY RECEPTOR"/>
    <property type="match status" value="1"/>
</dbReference>
<dbReference type="Pfam" id="PF13853">
    <property type="entry name" value="7tm_4"/>
    <property type="match status" value="1"/>
</dbReference>
<dbReference type="PRINTS" id="PR00237">
    <property type="entry name" value="GPCRRHODOPSN"/>
</dbReference>
<dbReference type="PRINTS" id="PR00245">
    <property type="entry name" value="OLFACTORYR"/>
</dbReference>
<dbReference type="SUPFAM" id="SSF81321">
    <property type="entry name" value="Family A G protein-coupled receptor-like"/>
    <property type="match status" value="1"/>
</dbReference>
<dbReference type="PROSITE" id="PS00237">
    <property type="entry name" value="G_PROTEIN_RECEP_F1_1"/>
    <property type="match status" value="1"/>
</dbReference>
<dbReference type="PROSITE" id="PS50262">
    <property type="entry name" value="G_PROTEIN_RECEP_F1_2"/>
    <property type="match status" value="1"/>
</dbReference>
<comment type="function">
    <text evidence="3">Odorant receptor.</text>
</comment>
<comment type="subcellular location">
    <subcellularLocation>
        <location>Cell membrane</location>
        <topology>Multi-pass membrane protein</topology>
    </subcellularLocation>
</comment>
<comment type="similarity">
    <text evidence="2">Belongs to the G-protein coupled receptor 1 family.</text>
</comment>
<comment type="online information" name="Human Olfactory Receptor Data Exploratorium (HORDE)">
    <link uri="http://genome.weizmann.ac.il/horde/card/index/symbol:OR13C2"/>
</comment>
<feature type="chain" id="PRO_0000150731" description="Olfactory receptor 13C2">
    <location>
        <begin position="1"/>
        <end position="318"/>
    </location>
</feature>
<feature type="topological domain" description="Extracellular" evidence="1">
    <location>
        <begin position="1"/>
        <end position="25"/>
    </location>
</feature>
<feature type="transmembrane region" description="Helical; Name=1" evidence="1">
    <location>
        <begin position="26"/>
        <end position="46"/>
    </location>
</feature>
<feature type="topological domain" description="Cytoplasmic" evidence="1">
    <location>
        <begin position="47"/>
        <end position="54"/>
    </location>
</feature>
<feature type="transmembrane region" description="Helical; Name=2" evidence="1">
    <location>
        <begin position="55"/>
        <end position="75"/>
    </location>
</feature>
<feature type="topological domain" description="Extracellular" evidence="1">
    <location>
        <begin position="76"/>
        <end position="99"/>
    </location>
</feature>
<feature type="transmembrane region" description="Helical; Name=3" evidence="1">
    <location>
        <begin position="100"/>
        <end position="120"/>
    </location>
</feature>
<feature type="topological domain" description="Cytoplasmic" evidence="1">
    <location>
        <begin position="121"/>
        <end position="139"/>
    </location>
</feature>
<feature type="transmembrane region" description="Helical; Name=4" evidence="1">
    <location>
        <begin position="140"/>
        <end position="160"/>
    </location>
</feature>
<feature type="topological domain" description="Extracellular" evidence="1">
    <location>
        <begin position="161"/>
        <end position="197"/>
    </location>
</feature>
<feature type="transmembrane region" description="Helical; Name=5" evidence="1">
    <location>
        <begin position="198"/>
        <end position="217"/>
    </location>
</feature>
<feature type="topological domain" description="Cytoplasmic" evidence="1">
    <location>
        <begin position="218"/>
        <end position="237"/>
    </location>
</feature>
<feature type="transmembrane region" description="Helical; Name=6" evidence="1">
    <location>
        <begin position="238"/>
        <end position="258"/>
    </location>
</feature>
<feature type="topological domain" description="Extracellular" evidence="1">
    <location>
        <begin position="259"/>
        <end position="277"/>
    </location>
</feature>
<feature type="transmembrane region" description="Helical; Name=7" evidence="1">
    <location>
        <begin position="278"/>
        <end position="298"/>
    </location>
</feature>
<feature type="topological domain" description="Cytoplasmic" evidence="1">
    <location>
        <begin position="299"/>
        <end position="318"/>
    </location>
</feature>
<feature type="glycosylation site" description="N-linked (GlcNAc...) asparagine" evidence="1">
    <location>
        <position position="5"/>
    </location>
</feature>
<feature type="disulfide bond" evidence="2">
    <location>
        <begin position="97"/>
        <end position="189"/>
    </location>
</feature>
<feature type="sequence variant" id="VAR_060030" description="In dbSNP:rs1851716.">
    <original>S</original>
    <variation>T</variation>
    <location>
        <position position="160"/>
    </location>
</feature>
<feature type="sequence variant" id="VAR_060031" description="In dbSNP:rs10156474.">
    <original>K</original>
    <variation>E</variation>
    <location>
        <position position="301"/>
    </location>
</feature>
<reference key="1">
    <citation type="submission" date="2001-07" db="EMBL/GenBank/DDBJ databases">
        <title>Genome-wide discovery and analysis of human seven transmembrane helix receptor genes.</title>
        <authorList>
            <person name="Suwa M."/>
            <person name="Sato T."/>
            <person name="Okouchi I."/>
            <person name="Arita M."/>
            <person name="Futami K."/>
            <person name="Matsumoto S."/>
            <person name="Tsutsumi S."/>
            <person name="Aburatani H."/>
            <person name="Asai K."/>
            <person name="Akiyama Y."/>
        </authorList>
    </citation>
    <scope>NUCLEOTIDE SEQUENCE [GENOMIC DNA]</scope>
</reference>
<reference key="2">
    <citation type="journal article" date="2004" name="Nature">
        <title>DNA sequence and analysis of human chromosome 9.</title>
        <authorList>
            <person name="Humphray S.J."/>
            <person name="Oliver K."/>
            <person name="Hunt A.R."/>
            <person name="Plumb R.W."/>
            <person name="Loveland J.E."/>
            <person name="Howe K.L."/>
            <person name="Andrews T.D."/>
            <person name="Searle S."/>
            <person name="Hunt S.E."/>
            <person name="Scott C.E."/>
            <person name="Jones M.C."/>
            <person name="Ainscough R."/>
            <person name="Almeida J.P."/>
            <person name="Ambrose K.D."/>
            <person name="Ashwell R.I.S."/>
            <person name="Babbage A.K."/>
            <person name="Babbage S."/>
            <person name="Bagguley C.L."/>
            <person name="Bailey J."/>
            <person name="Banerjee R."/>
            <person name="Barker D.J."/>
            <person name="Barlow K.F."/>
            <person name="Bates K."/>
            <person name="Beasley H."/>
            <person name="Beasley O."/>
            <person name="Bird C.P."/>
            <person name="Bray-Allen S."/>
            <person name="Brown A.J."/>
            <person name="Brown J.Y."/>
            <person name="Burford D."/>
            <person name="Burrill W."/>
            <person name="Burton J."/>
            <person name="Carder C."/>
            <person name="Carter N.P."/>
            <person name="Chapman J.C."/>
            <person name="Chen Y."/>
            <person name="Clarke G."/>
            <person name="Clark S.Y."/>
            <person name="Clee C.M."/>
            <person name="Clegg S."/>
            <person name="Collier R.E."/>
            <person name="Corby N."/>
            <person name="Crosier M."/>
            <person name="Cummings A.T."/>
            <person name="Davies J."/>
            <person name="Dhami P."/>
            <person name="Dunn M."/>
            <person name="Dutta I."/>
            <person name="Dyer L.W."/>
            <person name="Earthrowl M.E."/>
            <person name="Faulkner L."/>
            <person name="Fleming C.J."/>
            <person name="Frankish A."/>
            <person name="Frankland J.A."/>
            <person name="French L."/>
            <person name="Fricker D.G."/>
            <person name="Garner P."/>
            <person name="Garnett J."/>
            <person name="Ghori J."/>
            <person name="Gilbert J.G.R."/>
            <person name="Glison C."/>
            <person name="Grafham D.V."/>
            <person name="Gribble S."/>
            <person name="Griffiths C."/>
            <person name="Griffiths-Jones S."/>
            <person name="Grocock R."/>
            <person name="Guy J."/>
            <person name="Hall R.E."/>
            <person name="Hammond S."/>
            <person name="Harley J.L."/>
            <person name="Harrison E.S.I."/>
            <person name="Hart E.A."/>
            <person name="Heath P.D."/>
            <person name="Henderson C.D."/>
            <person name="Hopkins B.L."/>
            <person name="Howard P.J."/>
            <person name="Howden P.J."/>
            <person name="Huckle E."/>
            <person name="Johnson C."/>
            <person name="Johnson D."/>
            <person name="Joy A.A."/>
            <person name="Kay M."/>
            <person name="Keenan S."/>
            <person name="Kershaw J.K."/>
            <person name="Kimberley A.M."/>
            <person name="King A."/>
            <person name="Knights A."/>
            <person name="Laird G.K."/>
            <person name="Langford C."/>
            <person name="Lawlor S."/>
            <person name="Leongamornlert D.A."/>
            <person name="Leversha M."/>
            <person name="Lloyd C."/>
            <person name="Lloyd D.M."/>
            <person name="Lovell J."/>
            <person name="Martin S."/>
            <person name="Mashreghi-Mohammadi M."/>
            <person name="Matthews L."/>
            <person name="McLaren S."/>
            <person name="McLay K.E."/>
            <person name="McMurray A."/>
            <person name="Milne S."/>
            <person name="Nickerson T."/>
            <person name="Nisbett J."/>
            <person name="Nordsiek G."/>
            <person name="Pearce A.V."/>
            <person name="Peck A.I."/>
            <person name="Porter K.M."/>
            <person name="Pandian R."/>
            <person name="Pelan S."/>
            <person name="Phillimore B."/>
            <person name="Povey S."/>
            <person name="Ramsey Y."/>
            <person name="Rand V."/>
            <person name="Scharfe M."/>
            <person name="Sehra H.K."/>
            <person name="Shownkeen R."/>
            <person name="Sims S.K."/>
            <person name="Skuce C.D."/>
            <person name="Smith M."/>
            <person name="Steward C.A."/>
            <person name="Swarbreck D."/>
            <person name="Sycamore N."/>
            <person name="Tester J."/>
            <person name="Thorpe A."/>
            <person name="Tracey A."/>
            <person name="Tromans A."/>
            <person name="Thomas D.W."/>
            <person name="Wall M."/>
            <person name="Wallis J.M."/>
            <person name="West A.P."/>
            <person name="Whitehead S.L."/>
            <person name="Willey D.L."/>
            <person name="Williams S.A."/>
            <person name="Wilming L."/>
            <person name="Wray P.W."/>
            <person name="Young L."/>
            <person name="Ashurst J.L."/>
            <person name="Coulson A."/>
            <person name="Blocker H."/>
            <person name="Durbin R.M."/>
            <person name="Sulston J.E."/>
            <person name="Hubbard T."/>
            <person name="Jackson M.J."/>
            <person name="Bentley D.R."/>
            <person name="Beck S."/>
            <person name="Rogers J."/>
            <person name="Dunham I."/>
        </authorList>
    </citation>
    <scope>NUCLEOTIDE SEQUENCE [LARGE SCALE GENOMIC DNA]</scope>
</reference>
<reference key="3">
    <citation type="submission" date="2005-07" db="EMBL/GenBank/DDBJ databases">
        <authorList>
            <person name="Mural R.J."/>
            <person name="Istrail S."/>
            <person name="Sutton G.G."/>
            <person name="Florea L."/>
            <person name="Halpern A.L."/>
            <person name="Mobarry C.M."/>
            <person name="Lippert R."/>
            <person name="Walenz B."/>
            <person name="Shatkay H."/>
            <person name="Dew I."/>
            <person name="Miller J.R."/>
            <person name="Flanigan M.J."/>
            <person name="Edwards N.J."/>
            <person name="Bolanos R."/>
            <person name="Fasulo D."/>
            <person name="Halldorsson B.V."/>
            <person name="Hannenhalli S."/>
            <person name="Turner R."/>
            <person name="Yooseph S."/>
            <person name="Lu F."/>
            <person name="Nusskern D.R."/>
            <person name="Shue B.C."/>
            <person name="Zheng X.H."/>
            <person name="Zhong F."/>
            <person name="Delcher A.L."/>
            <person name="Huson D.H."/>
            <person name="Kravitz S.A."/>
            <person name="Mouchard L."/>
            <person name="Reinert K."/>
            <person name="Remington K.A."/>
            <person name="Clark A.G."/>
            <person name="Waterman M.S."/>
            <person name="Eichler E.E."/>
            <person name="Adams M.D."/>
            <person name="Hunkapiller M.W."/>
            <person name="Myers E.W."/>
            <person name="Venter J.C."/>
        </authorList>
    </citation>
    <scope>NUCLEOTIDE SEQUENCE [LARGE SCALE GENOMIC DNA]</scope>
</reference>
<reference key="4">
    <citation type="journal article" date="2004" name="Genome Res.">
        <title>The status, quality, and expansion of the NIH full-length cDNA project: the Mammalian Gene Collection (MGC).</title>
        <authorList>
            <consortium name="The MGC Project Team"/>
        </authorList>
    </citation>
    <scope>NUCLEOTIDE SEQUENCE [LARGE SCALE MRNA]</scope>
</reference>
<reference key="5">
    <citation type="journal article" date="2004" name="Proc. Natl. Acad. Sci. U.S.A.">
        <title>The human olfactory receptor gene family.</title>
        <authorList>
            <person name="Malnic B."/>
            <person name="Godfrey P.A."/>
            <person name="Buck L.B."/>
        </authorList>
    </citation>
    <scope>IDENTIFICATION</scope>
</reference>
<reference key="6">
    <citation type="journal article" date="2004" name="Proc. Natl. Acad. Sci. U.S.A.">
        <authorList>
            <person name="Malnic B."/>
            <person name="Godfrey P.A."/>
            <person name="Buck L.B."/>
        </authorList>
    </citation>
    <scope>ERRATUM OF PUBMED:14983052</scope>
</reference>
<organism>
    <name type="scientific">Homo sapiens</name>
    <name type="common">Human</name>
    <dbReference type="NCBI Taxonomy" id="9606"/>
    <lineage>
        <taxon>Eukaryota</taxon>
        <taxon>Metazoa</taxon>
        <taxon>Chordata</taxon>
        <taxon>Craniata</taxon>
        <taxon>Vertebrata</taxon>
        <taxon>Euteleostomi</taxon>
        <taxon>Mammalia</taxon>
        <taxon>Eutheria</taxon>
        <taxon>Euarchontoglires</taxon>
        <taxon>Primates</taxon>
        <taxon>Haplorrhini</taxon>
        <taxon>Catarrhini</taxon>
        <taxon>Hominidae</taxon>
        <taxon>Homo</taxon>
    </lineage>
</organism>
<sequence>MEWENHTILVEFFLKGLSGHPRLELLFFVLIFIMYVVILLGNGTLILISILDPHLHTPMYFFLGNLSFLDICYTTTSIPSTLVSFLSERKTISLSGCAVQMFLGLAMGTTECVLLGMMAFDRYVAICNPLRYPIIMSKDAYVPMAAGSWIIGAVNSAVQSVFVVQLPFCRNNIINHFTCEILAVMKLACADISDNEFIMLVATTLFILTPLLLIIVSYTLIIVSIFKISSSEGRSKASSTCSAHLTVVIIFYGTILFMYMKPKSKETLNSDDLDATDKIISMFYGVMTPMMNPLIYSLRNKDVKEAVKHLLNRRFFSK</sequence>
<evidence type="ECO:0000255" key="1"/>
<evidence type="ECO:0000255" key="2">
    <source>
        <dbReference type="PROSITE-ProRule" id="PRU00521"/>
    </source>
</evidence>
<evidence type="ECO:0000305" key="3"/>
<proteinExistence type="evidence at transcript level"/>
<keyword id="KW-1003">Cell membrane</keyword>
<keyword id="KW-1015">Disulfide bond</keyword>
<keyword id="KW-0297">G-protein coupled receptor</keyword>
<keyword id="KW-0325">Glycoprotein</keyword>
<keyword id="KW-0472">Membrane</keyword>
<keyword id="KW-0552">Olfaction</keyword>
<keyword id="KW-0675">Receptor</keyword>
<keyword id="KW-1185">Reference proteome</keyword>
<keyword id="KW-0716">Sensory transduction</keyword>
<keyword id="KW-0807">Transducer</keyword>
<keyword id="KW-0812">Transmembrane</keyword>
<keyword id="KW-1133">Transmembrane helix</keyword>
<name>O13C2_HUMAN</name>
<gene>
    <name type="primary">OR13C2</name>
</gene>
<protein>
    <recommendedName>
        <fullName>Olfactory receptor 13C2</fullName>
    </recommendedName>
    <alternativeName>
        <fullName>Olfactory receptor OR9-12</fullName>
    </alternativeName>
</protein>